<gene>
    <name evidence="7" type="primary">TRZ1</name>
    <name evidence="6" type="synonym">NUZ</name>
    <name evidence="10" type="ordered locus">At1g74700</name>
    <name evidence="12" type="ORF">F1M20.38</name>
    <name evidence="11" type="ORF">F25A4.32</name>
</gene>
<proteinExistence type="evidence at protein level"/>
<keyword id="KW-0106">Calcium</keyword>
<keyword id="KW-0963">Cytoplasm</keyword>
<keyword id="KW-0255">Endonuclease</keyword>
<keyword id="KW-0378">Hydrolase</keyword>
<keyword id="KW-0460">Magnesium</keyword>
<keyword id="KW-0464">Manganese</keyword>
<keyword id="KW-0479">Metal-binding</keyword>
<keyword id="KW-0540">Nuclease</keyword>
<keyword id="KW-1185">Reference proteome</keyword>
<keyword id="KW-0819">tRNA processing</keyword>
<keyword id="KW-0862">Zinc</keyword>
<protein>
    <recommendedName>
        <fullName evidence="7">tRNase Z TRZ1</fullName>
        <ecNumber evidence="2">3.1.26.11</ecNumber>
    </recommendedName>
    <alternativeName>
        <fullName evidence="6">Nuclear ribonuclease Z</fullName>
        <shortName evidence="6">Nuclear RNase Z</shortName>
    </alternativeName>
    <alternativeName>
        <fullName evidence="7">Short tRNase Z 1</fullName>
    </alternativeName>
    <alternativeName>
        <fullName evidence="6">Zinc phosphodiesterase NUZ</fullName>
    </alternativeName>
    <alternativeName>
        <fullName>tRNA 3 endonuclease</fullName>
    </alternativeName>
    <alternativeName>
        <fullName evidence="7">tRNase ZS1</fullName>
        <shortName evidence="7">AthTRZS1</shortName>
    </alternativeName>
</protein>
<dbReference type="EC" id="3.1.26.11" evidence="2"/>
<dbReference type="EMBL" id="AJ428989">
    <property type="protein sequence ID" value="CAD22100.1"/>
    <property type="molecule type" value="mRNA"/>
</dbReference>
<dbReference type="EMBL" id="AC008263">
    <property type="protein sequence ID" value="AAD55271.1"/>
    <property type="status" value="ALT_SEQ"/>
    <property type="molecule type" value="Genomic_DNA"/>
</dbReference>
<dbReference type="EMBL" id="AC011765">
    <property type="protein sequence ID" value="AAG52354.1"/>
    <property type="status" value="ALT_SEQ"/>
    <property type="molecule type" value="Genomic_DNA"/>
</dbReference>
<dbReference type="EMBL" id="CP002684">
    <property type="protein sequence ID" value="AEE35623.1"/>
    <property type="molecule type" value="Genomic_DNA"/>
</dbReference>
<dbReference type="PIR" id="C96776">
    <property type="entry name" value="C96776"/>
</dbReference>
<dbReference type="RefSeq" id="NP_177608.2">
    <property type="nucleotide sequence ID" value="NM_106128.3"/>
</dbReference>
<dbReference type="SMR" id="Q8LGU7"/>
<dbReference type="FunCoup" id="Q8LGU7">
    <property type="interactions" value="1236"/>
</dbReference>
<dbReference type="STRING" id="3702.Q8LGU7"/>
<dbReference type="PaxDb" id="3702-AT1G74700.1"/>
<dbReference type="ProteomicsDB" id="228000"/>
<dbReference type="EnsemblPlants" id="AT1G74700.1">
    <property type="protein sequence ID" value="AT1G74700.1"/>
    <property type="gene ID" value="AT1G74700"/>
</dbReference>
<dbReference type="GeneID" id="843809"/>
<dbReference type="Gramene" id="AT1G74700.1">
    <property type="protein sequence ID" value="AT1G74700.1"/>
    <property type="gene ID" value="AT1G74700"/>
</dbReference>
<dbReference type="KEGG" id="ath:AT1G74700"/>
<dbReference type="Araport" id="AT1G74700"/>
<dbReference type="TAIR" id="AT1G74700">
    <property type="gene designation" value="TRZ1"/>
</dbReference>
<dbReference type="eggNOG" id="ENOG502QVD0">
    <property type="taxonomic scope" value="Eukaryota"/>
</dbReference>
<dbReference type="HOGENOM" id="CLU_054121_0_0_1"/>
<dbReference type="InParanoid" id="Q8LGU7"/>
<dbReference type="OMA" id="LTHFSMR"/>
<dbReference type="PhylomeDB" id="Q8LGU7"/>
<dbReference type="BRENDA" id="3.1.26.11">
    <property type="organism ID" value="399"/>
</dbReference>
<dbReference type="PRO" id="PR:Q8LGU7"/>
<dbReference type="Proteomes" id="UP000006548">
    <property type="component" value="Chromosome 1"/>
</dbReference>
<dbReference type="ExpressionAtlas" id="Q8LGU7">
    <property type="expression patterns" value="baseline and differential"/>
</dbReference>
<dbReference type="GO" id="GO:0005737">
    <property type="term" value="C:cytoplasm"/>
    <property type="evidence" value="ECO:0007669"/>
    <property type="project" value="UniProtKB-SubCell"/>
</dbReference>
<dbReference type="GO" id="GO:0005634">
    <property type="term" value="C:nucleus"/>
    <property type="evidence" value="ECO:0000304"/>
    <property type="project" value="TAIR"/>
</dbReference>
<dbReference type="GO" id="GO:0042781">
    <property type="term" value="F:3'-tRNA processing endoribonuclease activity"/>
    <property type="evidence" value="ECO:0000314"/>
    <property type="project" value="TAIR"/>
</dbReference>
<dbReference type="GO" id="GO:0046872">
    <property type="term" value="F:metal ion binding"/>
    <property type="evidence" value="ECO:0007669"/>
    <property type="project" value="UniProtKB-KW"/>
</dbReference>
<dbReference type="GO" id="GO:0042780">
    <property type="term" value="P:tRNA 3'-end processing"/>
    <property type="evidence" value="ECO:0000314"/>
    <property type="project" value="TAIR"/>
</dbReference>
<dbReference type="GO" id="GO:0008033">
    <property type="term" value="P:tRNA processing"/>
    <property type="evidence" value="ECO:0000304"/>
    <property type="project" value="TAIR"/>
</dbReference>
<dbReference type="CDD" id="cd16272">
    <property type="entry name" value="RNaseZ_MBL-fold"/>
    <property type="match status" value="1"/>
</dbReference>
<dbReference type="FunFam" id="3.60.15.10:FF:000049">
    <property type="entry name" value="tRNase Z TRZ1"/>
    <property type="match status" value="1"/>
</dbReference>
<dbReference type="Gene3D" id="3.60.15.10">
    <property type="entry name" value="Ribonuclease Z/Hydroxyacylglutathione hydrolase-like"/>
    <property type="match status" value="1"/>
</dbReference>
<dbReference type="InterPro" id="IPR001279">
    <property type="entry name" value="Metallo-B-lactamas"/>
</dbReference>
<dbReference type="InterPro" id="IPR036866">
    <property type="entry name" value="RibonucZ/Hydroxyglut_hydro"/>
</dbReference>
<dbReference type="PANTHER" id="PTHR46504">
    <property type="entry name" value="TRNASE Z TRZ1"/>
    <property type="match status" value="1"/>
</dbReference>
<dbReference type="PANTHER" id="PTHR46504:SF2">
    <property type="entry name" value="TRNASE Z TRZ1"/>
    <property type="match status" value="1"/>
</dbReference>
<dbReference type="Pfam" id="PF12706">
    <property type="entry name" value="Lactamase_B_2"/>
    <property type="match status" value="1"/>
</dbReference>
<dbReference type="SUPFAM" id="SSF56281">
    <property type="entry name" value="Metallo-hydrolase/oxidoreductase"/>
    <property type="match status" value="1"/>
</dbReference>
<name>RNZ1_ARATH</name>
<reference key="1">
    <citation type="journal article" date="2002" name="EMBO J.">
        <title>Assigning a function to a conserved group of proteins: the tRNA 3' - processing enzymes.</title>
        <authorList>
            <person name="Schiffer S."/>
            <person name="Roesch S."/>
            <person name="Marchfelder A."/>
        </authorList>
    </citation>
    <scope>NUCLEOTIDE SEQUENCE [MRNA]</scope>
    <scope>FUNCTION</scope>
    <scope>HOMODIMERIZATION</scope>
    <source>
        <strain>cv. Columbia</strain>
        <tissue>Leaf</tissue>
    </source>
</reference>
<reference key="2">
    <citation type="journal article" date="2000" name="Nature">
        <title>Sequence and analysis of chromosome 1 of the plant Arabidopsis thaliana.</title>
        <authorList>
            <person name="Theologis A."/>
            <person name="Ecker J.R."/>
            <person name="Palm C.J."/>
            <person name="Federspiel N.A."/>
            <person name="Kaul S."/>
            <person name="White O."/>
            <person name="Alonso J."/>
            <person name="Altafi H."/>
            <person name="Araujo R."/>
            <person name="Bowman C.L."/>
            <person name="Brooks S.Y."/>
            <person name="Buehler E."/>
            <person name="Chan A."/>
            <person name="Chao Q."/>
            <person name="Chen H."/>
            <person name="Cheuk R.F."/>
            <person name="Chin C.W."/>
            <person name="Chung M.K."/>
            <person name="Conn L."/>
            <person name="Conway A.B."/>
            <person name="Conway A.R."/>
            <person name="Creasy T.H."/>
            <person name="Dewar K."/>
            <person name="Dunn P."/>
            <person name="Etgu P."/>
            <person name="Feldblyum T.V."/>
            <person name="Feng J.-D."/>
            <person name="Fong B."/>
            <person name="Fujii C.Y."/>
            <person name="Gill J.E."/>
            <person name="Goldsmith A.D."/>
            <person name="Haas B."/>
            <person name="Hansen N.F."/>
            <person name="Hughes B."/>
            <person name="Huizar L."/>
            <person name="Hunter J.L."/>
            <person name="Jenkins J."/>
            <person name="Johnson-Hopson C."/>
            <person name="Khan S."/>
            <person name="Khaykin E."/>
            <person name="Kim C.J."/>
            <person name="Koo H.L."/>
            <person name="Kremenetskaia I."/>
            <person name="Kurtz D.B."/>
            <person name="Kwan A."/>
            <person name="Lam B."/>
            <person name="Langin-Hooper S."/>
            <person name="Lee A."/>
            <person name="Lee J.M."/>
            <person name="Lenz C.A."/>
            <person name="Li J.H."/>
            <person name="Li Y.-P."/>
            <person name="Lin X."/>
            <person name="Liu S.X."/>
            <person name="Liu Z.A."/>
            <person name="Luros J.S."/>
            <person name="Maiti R."/>
            <person name="Marziali A."/>
            <person name="Militscher J."/>
            <person name="Miranda M."/>
            <person name="Nguyen M."/>
            <person name="Nierman W.C."/>
            <person name="Osborne B.I."/>
            <person name="Pai G."/>
            <person name="Peterson J."/>
            <person name="Pham P.K."/>
            <person name="Rizzo M."/>
            <person name="Rooney T."/>
            <person name="Rowley D."/>
            <person name="Sakano H."/>
            <person name="Salzberg S.L."/>
            <person name="Schwartz J.R."/>
            <person name="Shinn P."/>
            <person name="Southwick A.M."/>
            <person name="Sun H."/>
            <person name="Tallon L.J."/>
            <person name="Tambunga G."/>
            <person name="Toriumi M.J."/>
            <person name="Town C.D."/>
            <person name="Utterback T."/>
            <person name="Van Aken S."/>
            <person name="Vaysberg M."/>
            <person name="Vysotskaia V.S."/>
            <person name="Walker M."/>
            <person name="Wu D."/>
            <person name="Yu G."/>
            <person name="Fraser C.M."/>
            <person name="Venter J.C."/>
            <person name="Davis R.W."/>
        </authorList>
    </citation>
    <scope>NUCLEOTIDE SEQUENCE [LARGE SCALE GENOMIC DNA]</scope>
    <source>
        <strain>cv. Columbia</strain>
    </source>
</reference>
<reference key="3">
    <citation type="journal article" date="2017" name="Plant J.">
        <title>Araport11: a complete reannotation of the Arabidopsis thaliana reference genome.</title>
        <authorList>
            <person name="Cheng C.Y."/>
            <person name="Krishnakumar V."/>
            <person name="Chan A.P."/>
            <person name="Thibaud-Nissen F."/>
            <person name="Schobel S."/>
            <person name="Town C.D."/>
        </authorList>
    </citation>
    <scope>GENOME REANNOTATION</scope>
    <source>
        <strain>cv. Columbia</strain>
    </source>
</reference>
<reference key="4">
    <citation type="journal article" date="2005" name="Biol. Chem.">
        <title>The tRNase Z family of proteins: physiological functions, substrate specificity and structural properties.</title>
        <authorList>
            <person name="Vogel A."/>
            <person name="Schilling O."/>
            <person name="Spaeth B."/>
            <person name="Marchfelder A."/>
        </authorList>
    </citation>
    <scope>GENE FAMILY</scope>
    <scope>NOMENCLATURE</scope>
</reference>
<reference key="5">
    <citation type="journal article" date="2005" name="J. Biol. Chem.">
        <title>Analysis of the functional modules of the tRNA 3' endonuclease (tRNase Z).</title>
        <authorList>
            <person name="Spaeth B."/>
            <person name="Kirchner S."/>
            <person name="Vogel A."/>
            <person name="Schubert S."/>
            <person name="Meinlschmidt P."/>
            <person name="Aymanns S."/>
            <person name="Nezzar J."/>
            <person name="Marchfelder A."/>
        </authorList>
    </citation>
    <scope>FUNCTION</scope>
    <scope>CATALYTIC ACTIVITY</scope>
    <scope>SUBUNIT</scope>
    <scope>COFACTOR</scope>
    <scope>DOMAIN</scope>
    <scope>MUTAGENESIS OF CYS-25; CYS-40; 51-PHE--ILE-60; PHE-51; HIS-54; HIS-56; ASP-58; HIS-59; GLY-62; PRO-64; PRO-83; HIS-133; TYR-140; PRO-178; GLY-184; ASP-185; THR-186; LYS-203; LEU-205; GLU-208; THR-210; HIS-226; HIS-248; ARG-252; TYR-253 AND 270-GLU--PHE-280</scope>
</reference>
<reference key="6">
    <citation type="journal article" date="2007" name="Biochemistry">
        <title>Metal requirements and phosphodiesterase activity of tRNase Z enzymes.</title>
        <authorList>
            <person name="Spaeth B."/>
            <person name="Settele F."/>
            <person name="Schilling O."/>
            <person name="D'Angelo I."/>
            <person name="Vogel A."/>
            <person name="Feldmann I."/>
            <person name="Meyer-Klaucke W."/>
            <person name="Marchfelder A."/>
        </authorList>
    </citation>
    <scope>FUNCTION</scope>
    <scope>SUBSTRATE SPECIFICITY</scope>
    <scope>COFACTOR</scope>
    <scope>BIOPHYSICOCHEMICAL PROPERTIES</scope>
    <scope>3D-STRUCTURE MODELING</scope>
</reference>
<reference key="7">
    <citation type="journal article" date="2009" name="Plant Physiol.">
        <title>Arabidopsis encodes four tRNase Z enzymes.</title>
        <authorList>
            <person name="Canino G."/>
            <person name="Bocian E."/>
            <person name="Barbezier N."/>
            <person name="Echeverria M."/>
            <person name="Forner J."/>
            <person name="Binder S."/>
            <person name="Marchfelder A."/>
        </authorList>
    </citation>
    <scope>FUNCTION</scope>
    <scope>SUBCELLULAR LOCATION</scope>
    <scope>DISRUPTION PHENOTYPE</scope>
</reference>
<reference key="8">
    <citation type="journal article" date="2009" name="Plant Physiol.">
        <title>Processing of a dicistronic tRNA-snoRNA precursor: combined analysis in vitro and in vivo reveals alternate pathways and coupling to assembly of snoRNP.</title>
        <authorList>
            <person name="Barbezier N."/>
            <person name="Canino G."/>
            <person name="Rodor J."/>
            <person name="Jobet E."/>
            <person name="Saez-Vasquez J."/>
            <person name="Marchfelder A."/>
            <person name="Echeverria M."/>
        </authorList>
    </citation>
    <scope>FUNCTION</scope>
</reference>
<organism>
    <name type="scientific">Arabidopsis thaliana</name>
    <name type="common">Mouse-ear cress</name>
    <dbReference type="NCBI Taxonomy" id="3702"/>
    <lineage>
        <taxon>Eukaryota</taxon>
        <taxon>Viridiplantae</taxon>
        <taxon>Streptophyta</taxon>
        <taxon>Embryophyta</taxon>
        <taxon>Tracheophyta</taxon>
        <taxon>Spermatophyta</taxon>
        <taxon>Magnoliopsida</taxon>
        <taxon>eudicotyledons</taxon>
        <taxon>Gunneridae</taxon>
        <taxon>Pentapetalae</taxon>
        <taxon>rosids</taxon>
        <taxon>malvids</taxon>
        <taxon>Brassicales</taxon>
        <taxon>Brassicaceae</taxon>
        <taxon>Camelineae</taxon>
        <taxon>Arabidopsis</taxon>
    </lineage>
</organism>
<feature type="chain" id="PRO_0000155834" description="tRNase Z TRZ1">
    <location>
        <begin position="1"/>
        <end position="280"/>
    </location>
</feature>
<feature type="mutagenesis site" description="Reduced catalytic activity, but no effect on dimerization and tRNA binding." evidence="2">
    <original>C</original>
    <variation>G</variation>
    <location>
        <position position="25"/>
    </location>
</feature>
<feature type="mutagenesis site" description="No effect." evidence="2">
    <original>C</original>
    <variation>G</variation>
    <location>
        <position position="40"/>
    </location>
</feature>
<feature type="mutagenesis site" description="Loss of tRNA binding, but no effect on dimerization." evidence="2">
    <location>
        <begin position="51"/>
        <end position="60"/>
    </location>
</feature>
<feature type="mutagenesis site" description="No effect." evidence="2">
    <original>F</original>
    <variation>L</variation>
    <location>
        <position position="51"/>
    </location>
</feature>
<feature type="mutagenesis site" description="Loss of catalytic activity, but no effect on dimerization and tRNA binding." evidence="2">
    <original>H</original>
    <variation>L</variation>
    <location>
        <position position="54"/>
    </location>
</feature>
<feature type="mutagenesis site" description="Loss of catalytic activity, but no effect on dimerization and tRNA binding." evidence="2">
    <original>H</original>
    <variation>L</variation>
    <location>
        <position position="56"/>
    </location>
</feature>
<feature type="mutagenesis site" description="Loss of catalytic activity, but no effect on dimerization and tRNA binding." evidence="2">
    <original>D</original>
    <variation>A</variation>
    <location>
        <position position="58"/>
    </location>
</feature>
<feature type="mutagenesis site" description="Loss of dimerization and catalytic activity." evidence="2">
    <original>H</original>
    <variation>L</variation>
    <location>
        <position position="59"/>
    </location>
</feature>
<feature type="mutagenesis site" description="Reduced catalytic activity, but no effect on dimerization and tRNA binding." evidence="2">
    <original>G</original>
    <variation>V</variation>
    <location>
        <position position="62"/>
    </location>
</feature>
<feature type="mutagenesis site" description="No effect." evidence="2">
    <original>P</original>
    <variation>A</variation>
    <location>
        <position position="64"/>
    </location>
</feature>
<feature type="mutagenesis site" description="Loss of dimerization and catalytic activity." evidence="2">
    <original>P</original>
    <variation>L</variation>
    <location>
        <position position="83"/>
    </location>
</feature>
<feature type="mutagenesis site" description="Loss of catalytic activity, but no effect on dimerization and tRNA binding." evidence="2">
    <original>H</original>
    <variation>L</variation>
    <location>
        <position position="133"/>
    </location>
</feature>
<feature type="mutagenesis site" description="Reduced catalytic activity, but no effect on dimerization and tRNA binding." evidence="2">
    <original>Y</original>
    <variation>L</variation>
    <location>
        <position position="140"/>
    </location>
</feature>
<feature type="mutagenesis site" description="Reduced catalytic activity, but no effect on dimerization and tRNA binding." evidence="2">
    <original>P</original>
    <variation>A</variation>
    <location>
        <position position="178"/>
    </location>
</feature>
<feature type="mutagenesis site" description="Loss of tRNA binding, but no effect on dimerization." evidence="2">
    <original>G</original>
    <variation>V</variation>
    <location>
        <position position="184"/>
    </location>
</feature>
<feature type="mutagenesis site" description="Loss of catalytic activity, but no effect on dimerization and tRNA binding." evidence="2">
    <original>D</original>
    <variation>G</variation>
    <location>
        <position position="185"/>
    </location>
</feature>
<feature type="mutagenesis site" description="Loss of dimerization and catalytic activity." evidence="2">
    <original>T</original>
    <variation>I</variation>
    <location>
        <position position="186"/>
    </location>
</feature>
<feature type="mutagenesis site" description="Loss of dimerization and catalytic activity." evidence="2">
    <original>K</original>
    <variation>I</variation>
    <location>
        <position position="203"/>
    </location>
</feature>
<feature type="mutagenesis site" description="Reduced catalytic activity, but no effect on dimerization and tRNA binding." evidence="2">
    <original>L</original>
    <variation>I</variation>
    <location>
        <position position="205"/>
    </location>
</feature>
<feature type="mutagenesis site" description="Reduced catalytic activity, but no effect on dimerization and tRNA binding." evidence="2">
    <original>E</original>
    <variation>A</variation>
    <location>
        <position position="208"/>
    </location>
</feature>
<feature type="mutagenesis site" description="No effect." evidence="2">
    <original>T</original>
    <variation>I</variation>
    <location>
        <position position="210"/>
    </location>
</feature>
<feature type="mutagenesis site" description="Loss of catalytic activity, but no effect on dimerization and tRNA binding." evidence="2">
    <original>H</original>
    <variation>L</variation>
    <location>
        <position position="226"/>
    </location>
</feature>
<feature type="mutagenesis site" description="Loss of dimerization and catalytic activity." evidence="2">
    <original>H</original>
    <variation>L</variation>
    <location>
        <position position="248"/>
    </location>
</feature>
<feature type="mutagenesis site" description="Reduced pre-tRNA processing, but increased hydrolysis of bpNPP. No effect on dimerization and tRNA binding." evidence="2">
    <original>R</original>
    <variation>G</variation>
    <location>
        <position position="252"/>
    </location>
</feature>
<feature type="mutagenesis site" description="Loss of catalytic activity, but no effect on dimerization and tRNA binding." evidence="2">
    <location>
        <position position="252"/>
    </location>
</feature>
<feature type="mutagenesis site" description="Reduced catalytic activity, but no effect on dimerization and tRNA binding." evidence="2">
    <original>Y</original>
    <variation>S</variation>
    <location>
        <position position="253"/>
    </location>
</feature>
<feature type="mutagenesis site" description="Loss of dimerization and catalytic activity." evidence="2">
    <location>
        <begin position="270"/>
        <end position="280"/>
    </location>
</feature>
<evidence type="ECO:0000269" key="1">
    <source>
    </source>
</evidence>
<evidence type="ECO:0000269" key="2">
    <source>
    </source>
</evidence>
<evidence type="ECO:0000269" key="3">
    <source>
    </source>
</evidence>
<evidence type="ECO:0000269" key="4">
    <source>
    </source>
</evidence>
<evidence type="ECO:0000269" key="5">
    <source>
    </source>
</evidence>
<evidence type="ECO:0000303" key="6">
    <source>
    </source>
</evidence>
<evidence type="ECO:0000303" key="7">
    <source>
    </source>
</evidence>
<evidence type="ECO:0000305" key="8"/>
<evidence type="ECO:0000305" key="9">
    <source>
    </source>
</evidence>
<evidence type="ECO:0000312" key="10">
    <source>
        <dbReference type="Araport" id="AT1G74700"/>
    </source>
</evidence>
<evidence type="ECO:0000312" key="11">
    <source>
        <dbReference type="EMBL" id="AAD55271.1"/>
    </source>
</evidence>
<evidence type="ECO:0000312" key="12">
    <source>
        <dbReference type="EMBL" id="AAG52354.1"/>
    </source>
</evidence>
<comment type="function">
    <text evidence="1 2 3 4 5">Zinc phosphodiesterase, which displays tRNA 3'-processing endonuclease activity (PubMed:12032089, PubMed:16118225, PubMed:18052196, PubMed:19411372). Involved in tRNA maturation, by removing a 3'-trailer from precursor tRNA (PubMed:12032089, PubMed:18052196, PubMed:19411372). Can use bis-(p-nitophenyl) phosphate (bpNPP) as substrate (PubMed:18052196). Involved in the processing of small nucleolar RNAs (snoRNAs) (PubMed:19420328).</text>
</comment>
<comment type="catalytic activity">
    <reaction evidence="2">
        <text>Endonucleolytic cleavage of RNA, removing extra 3' nucleotides from tRNA precursor, generating 3' termini of tRNAs. A 3'-hydroxy group is left at the tRNA terminus and a 5'-phosphoryl group is left at the trailer molecule.</text>
        <dbReference type="EC" id="3.1.26.11"/>
    </reaction>
</comment>
<comment type="cofactor">
    <cofactor evidence="3">
        <name>Zn(2+)</name>
        <dbReference type="ChEBI" id="CHEBI:29105"/>
    </cofactor>
    <cofactor evidence="3">
        <name>Ca(2+)</name>
        <dbReference type="ChEBI" id="CHEBI:29108"/>
    </cofactor>
    <cofactor evidence="2 3">
        <name>Mn(2+)</name>
        <dbReference type="ChEBI" id="CHEBI:29035"/>
    </cofactor>
    <cofactor evidence="2 3">
        <name>Mg(2+)</name>
        <dbReference type="ChEBI" id="CHEBI:18420"/>
    </cofactor>
    <text evidence="3">Besides the tightly bound Zn(2+) ion, TRZ1 requires additional Ca(2+), Mn(2+) or Mg(2+) for pre-tRNA processing, while bpNPP hydrolysis occurs without addition of metal ions but is stimulated 2- to 3-fold when free Mn(2+) or Zn(2+) ions are added.</text>
</comment>
<comment type="biophysicochemical properties">
    <kinetics>
        <KM evidence="3">8.5 mM for bpNPP</KM>
        <text evidence="3">kcat is 7.4 sec(-1) with bpNPP as substrate.</text>
    </kinetics>
</comment>
<comment type="subunit">
    <text evidence="2 9">Homodimer.</text>
</comment>
<comment type="subcellular location">
    <subcellularLocation>
        <location evidence="4">Cytoplasm</location>
    </subcellularLocation>
</comment>
<comment type="domain">
    <text evidence="2">The C-terminus (270-280) is essential for tRNA binding and processing activity.</text>
</comment>
<comment type="disruption phenotype">
    <text evidence="4">No visible phenotype when grown under standard conditions.</text>
</comment>
<comment type="similarity">
    <text evidence="8">Belongs to the RNase Z family.</text>
</comment>
<comment type="sequence caution" evidence="8">
    <conflict type="erroneous gene model prediction">
        <sequence resource="EMBL-CDS" id="AAD55271"/>
    </conflict>
</comment>
<comment type="sequence caution" evidence="8">
    <conflict type="erroneous gene model prediction">
        <sequence resource="EMBL-CDS" id="AAG52354"/>
    </conflict>
</comment>
<accession>Q8LGU7</accession>
<accession>Q9CA48</accession>
<accession>Q9SSF6</accession>
<sequence length="280" mass="31333">MEKKKAMQIEGYPIEGLSIGGHETCIIFPSLRIAFDIGRCPHRAISQDFLFISHSHMDHIGGLPMYVATRGLYKMKPPTIIVPASIKETVESLFEVHRKLDSSELKHNLVGLDIGEEFIIRKDLKVKAFKTFHVIQSQGYVVYSTKYKLKKEYIGLSGNEIKNLKVSGVEITDSIITPEVAFTGDTTSDFVVDETNADALKAKVLVMESTFLDDSVSVEHARDYGHIHISEIVNHAEKFENKAILLIHFSARYTVKEIEDAVSALPPPLEGRVFALTQGF</sequence>